<proteinExistence type="evidence at protein level"/>
<gene>
    <name type="primary">dpaA</name>
    <name type="synonym">spoVFA</name>
    <name type="ordered locus">BSU16730</name>
    <name type="ORF">orfY</name>
</gene>
<comment type="function">
    <text evidence="2">Together with DpaB, catalyzes the conversion of dihydrodipicolinate to dipicolinate (DPA), which constitutes up to 10% of the dry weight of the spore.</text>
</comment>
<comment type="catalytic activity">
    <reaction>
        <text>(S)-2,3-dihydrodipicolinate + NADP(+) = dipicolinate + NADPH + H(+)</text>
        <dbReference type="Rhea" id="RHEA:47092"/>
        <dbReference type="ChEBI" id="CHEBI:15378"/>
        <dbReference type="ChEBI" id="CHEBI:30620"/>
        <dbReference type="ChEBI" id="CHEBI:36167"/>
        <dbReference type="ChEBI" id="CHEBI:57783"/>
        <dbReference type="ChEBI" id="CHEBI:58349"/>
    </reaction>
</comment>
<comment type="subunit">
    <text evidence="2 3">Dipicolinate synthase likely consists of DpaA and DpaB, since both proteins are required for DPA synthesis.</text>
</comment>
<comment type="induction">
    <text evidence="1 2">Is not expressed during vegetative growth; is expressed at stage 5 of sporulation specifically in the mother cell compartment, under the control of the sigma-K factor. Is repressed by GerE.</text>
</comment>
<comment type="disruption phenotype">
    <text evidence="2">Disruption of this gene has no effect on vegetative growth but causes a sporulation defect, characterized by heat-sensitive spores devoid of DPA, which can be cured by supplementation with dipicolinate.</text>
</comment>
<accession>Q04809</accession>
<name>DPAA_BACSU</name>
<organism>
    <name type="scientific">Bacillus subtilis (strain 168)</name>
    <dbReference type="NCBI Taxonomy" id="224308"/>
    <lineage>
        <taxon>Bacteria</taxon>
        <taxon>Bacillati</taxon>
        <taxon>Bacillota</taxon>
        <taxon>Bacilli</taxon>
        <taxon>Bacillales</taxon>
        <taxon>Bacillaceae</taxon>
        <taxon>Bacillus</taxon>
    </lineage>
</organism>
<reference key="1">
    <citation type="journal article" date="1993" name="J. Biol. Chem.">
        <title>Organization and nucleotide sequence of the Bacillus subtilis diaminopimelate operon, a cluster of genes encoding the first three enzymes of diaminopimelate synthesis and dipicolinate synthase.</title>
        <authorList>
            <person name="Chen N.-Y."/>
            <person name="Jiang S.-Q."/>
            <person name="Klein D.A."/>
            <person name="Paulus H."/>
        </authorList>
    </citation>
    <scope>NUCLEOTIDE SEQUENCE [GENOMIC DNA]</scope>
    <scope>INDUCTION</scope>
    <source>
        <strain>168</strain>
    </source>
</reference>
<reference key="2">
    <citation type="journal article" date="1993" name="J. Mol. Biol.">
        <title>Cloning, DNA sequence, functional analysis and transcriptional regulation of the genes encoding dipicolinic acid synthetase required for sporulation in Bacillus subtilis.</title>
        <authorList>
            <person name="Daniel R.A."/>
            <person name="Errington J."/>
        </authorList>
    </citation>
    <scope>NUCLEOTIDE SEQUENCE [GENOMIC DNA]</scope>
    <scope>FUNCTION IN DPA SYNTHESIS</scope>
    <scope>GENE NAME</scope>
    <scope>INDUCTION</scope>
    <scope>SUBUNIT</scope>
    <scope>DISRUPTION PHENOTYPE</scope>
    <source>
        <strain>168</strain>
        <strain>SG38</strain>
    </source>
</reference>
<reference key="3">
    <citation type="journal article" date="1997" name="Nature">
        <title>The complete genome sequence of the Gram-positive bacterium Bacillus subtilis.</title>
        <authorList>
            <person name="Kunst F."/>
            <person name="Ogasawara N."/>
            <person name="Moszer I."/>
            <person name="Albertini A.M."/>
            <person name="Alloni G."/>
            <person name="Azevedo V."/>
            <person name="Bertero M.G."/>
            <person name="Bessieres P."/>
            <person name="Bolotin A."/>
            <person name="Borchert S."/>
            <person name="Borriss R."/>
            <person name="Boursier L."/>
            <person name="Brans A."/>
            <person name="Braun M."/>
            <person name="Brignell S.C."/>
            <person name="Bron S."/>
            <person name="Brouillet S."/>
            <person name="Bruschi C.V."/>
            <person name="Caldwell B."/>
            <person name="Capuano V."/>
            <person name="Carter N.M."/>
            <person name="Choi S.-K."/>
            <person name="Codani J.-J."/>
            <person name="Connerton I.F."/>
            <person name="Cummings N.J."/>
            <person name="Daniel R.A."/>
            <person name="Denizot F."/>
            <person name="Devine K.M."/>
            <person name="Duesterhoeft A."/>
            <person name="Ehrlich S.D."/>
            <person name="Emmerson P.T."/>
            <person name="Entian K.-D."/>
            <person name="Errington J."/>
            <person name="Fabret C."/>
            <person name="Ferrari E."/>
            <person name="Foulger D."/>
            <person name="Fritz C."/>
            <person name="Fujita M."/>
            <person name="Fujita Y."/>
            <person name="Fuma S."/>
            <person name="Galizzi A."/>
            <person name="Galleron N."/>
            <person name="Ghim S.-Y."/>
            <person name="Glaser P."/>
            <person name="Goffeau A."/>
            <person name="Golightly E.J."/>
            <person name="Grandi G."/>
            <person name="Guiseppi G."/>
            <person name="Guy B.J."/>
            <person name="Haga K."/>
            <person name="Haiech J."/>
            <person name="Harwood C.R."/>
            <person name="Henaut A."/>
            <person name="Hilbert H."/>
            <person name="Holsappel S."/>
            <person name="Hosono S."/>
            <person name="Hullo M.-F."/>
            <person name="Itaya M."/>
            <person name="Jones L.-M."/>
            <person name="Joris B."/>
            <person name="Karamata D."/>
            <person name="Kasahara Y."/>
            <person name="Klaerr-Blanchard M."/>
            <person name="Klein C."/>
            <person name="Kobayashi Y."/>
            <person name="Koetter P."/>
            <person name="Koningstein G."/>
            <person name="Krogh S."/>
            <person name="Kumano M."/>
            <person name="Kurita K."/>
            <person name="Lapidus A."/>
            <person name="Lardinois S."/>
            <person name="Lauber J."/>
            <person name="Lazarevic V."/>
            <person name="Lee S.-M."/>
            <person name="Levine A."/>
            <person name="Liu H."/>
            <person name="Masuda S."/>
            <person name="Mauel C."/>
            <person name="Medigue C."/>
            <person name="Medina N."/>
            <person name="Mellado R.P."/>
            <person name="Mizuno M."/>
            <person name="Moestl D."/>
            <person name="Nakai S."/>
            <person name="Noback M."/>
            <person name="Noone D."/>
            <person name="O'Reilly M."/>
            <person name="Ogawa K."/>
            <person name="Ogiwara A."/>
            <person name="Oudega B."/>
            <person name="Park S.-H."/>
            <person name="Parro V."/>
            <person name="Pohl T.M."/>
            <person name="Portetelle D."/>
            <person name="Porwollik S."/>
            <person name="Prescott A.M."/>
            <person name="Presecan E."/>
            <person name="Pujic P."/>
            <person name="Purnelle B."/>
            <person name="Rapoport G."/>
            <person name="Rey M."/>
            <person name="Reynolds S."/>
            <person name="Rieger M."/>
            <person name="Rivolta C."/>
            <person name="Rocha E."/>
            <person name="Roche B."/>
            <person name="Rose M."/>
            <person name="Sadaie Y."/>
            <person name="Sato T."/>
            <person name="Scanlan E."/>
            <person name="Schleich S."/>
            <person name="Schroeter R."/>
            <person name="Scoffone F."/>
            <person name="Sekiguchi J."/>
            <person name="Sekowska A."/>
            <person name="Seror S.J."/>
            <person name="Serror P."/>
            <person name="Shin B.-S."/>
            <person name="Soldo B."/>
            <person name="Sorokin A."/>
            <person name="Tacconi E."/>
            <person name="Takagi T."/>
            <person name="Takahashi H."/>
            <person name="Takemaru K."/>
            <person name="Takeuchi M."/>
            <person name="Tamakoshi A."/>
            <person name="Tanaka T."/>
            <person name="Terpstra P."/>
            <person name="Tognoni A."/>
            <person name="Tosato V."/>
            <person name="Uchiyama S."/>
            <person name="Vandenbol M."/>
            <person name="Vannier F."/>
            <person name="Vassarotti A."/>
            <person name="Viari A."/>
            <person name="Wambutt R."/>
            <person name="Wedler E."/>
            <person name="Wedler H."/>
            <person name="Weitzenegger T."/>
            <person name="Winters P."/>
            <person name="Wipat A."/>
            <person name="Yamamoto H."/>
            <person name="Yamane K."/>
            <person name="Yasumoto K."/>
            <person name="Yata K."/>
            <person name="Yoshida K."/>
            <person name="Yoshikawa H.-F."/>
            <person name="Zumstein E."/>
            <person name="Yoshikawa H."/>
            <person name="Danchin A."/>
        </authorList>
    </citation>
    <scope>NUCLEOTIDE SEQUENCE [LARGE SCALE GENOMIC DNA]</scope>
    <source>
        <strain>168</strain>
    </source>
</reference>
<reference key="4">
    <citation type="submission" date="2011-07" db="PDB data bank">
        <title>Crystal structure of dipicolinate synthase, A chain, from Bacillus subtilis.</title>
        <authorList>
            <consortium name="Midwest center for structural genomics (MCSG)"/>
        </authorList>
    </citation>
    <scope>X-RAY CRYSTALLOGRAPHY (2.79 ANGSTROMS) IN COMPLEX WITH NADP</scope>
</reference>
<dbReference type="EC" id="1.3.1.-"/>
<dbReference type="EMBL" id="L08471">
    <property type="protein sequence ID" value="AAA22381.1"/>
    <property type="molecule type" value="Genomic_DNA"/>
</dbReference>
<dbReference type="EMBL" id="Z22554">
    <property type="protein sequence ID" value="CAA80274.1"/>
    <property type="molecule type" value="Genomic_DNA"/>
</dbReference>
<dbReference type="EMBL" id="AL009126">
    <property type="protein sequence ID" value="CAB13546.1"/>
    <property type="molecule type" value="Genomic_DNA"/>
</dbReference>
<dbReference type="PIR" id="G46665">
    <property type="entry name" value="G46665"/>
</dbReference>
<dbReference type="RefSeq" id="NP_389555.1">
    <property type="nucleotide sequence ID" value="NC_000964.3"/>
</dbReference>
<dbReference type="RefSeq" id="WP_003231888.1">
    <property type="nucleotide sequence ID" value="NZ_OZ025638.1"/>
</dbReference>
<dbReference type="PDB" id="2RIR">
    <property type="method" value="X-ray"/>
    <property type="resolution" value="2.79 A"/>
    <property type="chains" value="A/B/C/D/E/F/G/H=2-296"/>
</dbReference>
<dbReference type="PDBsum" id="2RIR"/>
<dbReference type="SMR" id="Q04809"/>
<dbReference type="FunCoup" id="Q04809">
    <property type="interactions" value="111"/>
</dbReference>
<dbReference type="STRING" id="224308.BSU16730"/>
<dbReference type="PaxDb" id="224308-BSU16730"/>
<dbReference type="DNASU" id="939652"/>
<dbReference type="EnsemblBacteria" id="CAB13546">
    <property type="protein sequence ID" value="CAB13546"/>
    <property type="gene ID" value="BSU_16730"/>
</dbReference>
<dbReference type="GeneID" id="939652"/>
<dbReference type="KEGG" id="bsu:BSU16730"/>
<dbReference type="PATRIC" id="fig|224308.179.peg.1815"/>
<dbReference type="eggNOG" id="COG1052">
    <property type="taxonomic scope" value="Bacteria"/>
</dbReference>
<dbReference type="InParanoid" id="Q04809"/>
<dbReference type="OrthoDB" id="8840764at2"/>
<dbReference type="PhylomeDB" id="Q04809"/>
<dbReference type="BioCyc" id="BSUB:BSU16730-MONOMER"/>
<dbReference type="BioCyc" id="MetaCyc:MONOMER-6566"/>
<dbReference type="EvolutionaryTrace" id="Q04809"/>
<dbReference type="Proteomes" id="UP000001570">
    <property type="component" value="Chromosome"/>
</dbReference>
<dbReference type="GO" id="GO:0016491">
    <property type="term" value="F:oxidoreductase activity"/>
    <property type="evidence" value="ECO:0007669"/>
    <property type="project" value="UniProtKB-KW"/>
</dbReference>
<dbReference type="GO" id="GO:0030435">
    <property type="term" value="P:sporulation resulting in formation of a cellular spore"/>
    <property type="evidence" value="ECO:0007669"/>
    <property type="project" value="UniProtKB-KW"/>
</dbReference>
<dbReference type="Gene3D" id="3.40.50.720">
    <property type="entry name" value="NAD(P)-binding Rossmann-like Domain"/>
    <property type="match status" value="2"/>
</dbReference>
<dbReference type="InterPro" id="IPR007698">
    <property type="entry name" value="AlaDH/PNT_NAD(H)-bd"/>
</dbReference>
<dbReference type="InterPro" id="IPR014215">
    <property type="entry name" value="Dipicolinic_acid_synth_A"/>
</dbReference>
<dbReference type="InterPro" id="IPR031629">
    <property type="entry name" value="DpaA_N"/>
</dbReference>
<dbReference type="InterPro" id="IPR036291">
    <property type="entry name" value="NAD(P)-bd_dom_sf"/>
</dbReference>
<dbReference type="NCBIfam" id="NF006162">
    <property type="entry name" value="PRK08306.1"/>
    <property type="match status" value="1"/>
</dbReference>
<dbReference type="NCBIfam" id="TIGR02853">
    <property type="entry name" value="spore_dpaA"/>
    <property type="match status" value="1"/>
</dbReference>
<dbReference type="Pfam" id="PF01262">
    <property type="entry name" value="AlaDh_PNT_C"/>
    <property type="match status" value="1"/>
</dbReference>
<dbReference type="Pfam" id="PF16924">
    <property type="entry name" value="DpaA_N"/>
    <property type="match status" value="1"/>
</dbReference>
<dbReference type="SUPFAM" id="SSF51735">
    <property type="entry name" value="NAD(P)-binding Rossmann-fold domains"/>
    <property type="match status" value="1"/>
</dbReference>
<keyword id="KW-0002">3D-structure</keyword>
<keyword id="KW-0521">NADP</keyword>
<keyword id="KW-0560">Oxidoreductase</keyword>
<keyword id="KW-1185">Reference proteome</keyword>
<keyword id="KW-0749">Sporulation</keyword>
<feature type="chain" id="PRO_0000072083" description="Dipicolinate synthase subunit A">
    <location>
        <begin position="1"/>
        <end position="297"/>
    </location>
</feature>
<feature type="binding site" evidence="3">
    <location>
        <begin position="164"/>
        <end position="165"/>
    </location>
    <ligand>
        <name>NADP(+)</name>
        <dbReference type="ChEBI" id="CHEBI:58349"/>
    </ligand>
</feature>
<feature type="binding site" evidence="3">
    <location>
        <position position="185"/>
    </location>
    <ligand>
        <name>NADP(+)</name>
        <dbReference type="ChEBI" id="CHEBI:58349"/>
    </ligand>
</feature>
<feature type="binding site" evidence="3">
    <location>
        <position position="203"/>
    </location>
    <ligand>
        <name>NADP(+)</name>
        <dbReference type="ChEBI" id="CHEBI:58349"/>
    </ligand>
</feature>
<feature type="binding site" evidence="3">
    <location>
        <begin position="242"/>
        <end position="244"/>
    </location>
    <ligand>
        <name>NADP(+)</name>
        <dbReference type="ChEBI" id="CHEBI:58349"/>
    </ligand>
</feature>
<feature type="binding site" evidence="3">
    <location>
        <begin position="264"/>
        <end position="267"/>
    </location>
    <ligand>
        <name>NADP(+)</name>
        <dbReference type="ChEBI" id="CHEBI:58349"/>
    </ligand>
</feature>
<feature type="strand" evidence="4">
    <location>
        <begin position="6"/>
        <end position="12"/>
    </location>
</feature>
<feature type="helix" evidence="4">
    <location>
        <begin position="14"/>
        <end position="25"/>
    </location>
</feature>
<feature type="strand" evidence="4">
    <location>
        <begin position="29"/>
        <end position="34"/>
    </location>
</feature>
<feature type="strand" evidence="4">
    <location>
        <begin position="45"/>
        <end position="47"/>
    </location>
</feature>
<feature type="helix" evidence="4">
    <location>
        <begin position="50"/>
        <end position="52"/>
    </location>
</feature>
<feature type="helix" evidence="4">
    <location>
        <begin position="55"/>
        <end position="57"/>
    </location>
</feature>
<feature type="strand" evidence="4">
    <location>
        <begin position="59"/>
        <end position="62"/>
    </location>
</feature>
<feature type="turn" evidence="4">
    <location>
        <begin position="70"/>
        <end position="72"/>
    </location>
</feature>
<feature type="strand" evidence="4">
    <location>
        <begin position="76"/>
        <end position="78"/>
    </location>
</feature>
<feature type="helix" evidence="4">
    <location>
        <begin position="87"/>
        <end position="91"/>
    </location>
</feature>
<feature type="strand" evidence="4">
    <location>
        <begin position="98"/>
        <end position="103"/>
    </location>
</feature>
<feature type="helix" evidence="4">
    <location>
        <begin position="106"/>
        <end position="114"/>
    </location>
</feature>
<feature type="strand" evidence="4">
    <location>
        <begin position="119"/>
        <end position="121"/>
    </location>
</feature>
<feature type="helix" evidence="4">
    <location>
        <begin position="122"/>
        <end position="124"/>
    </location>
</feature>
<feature type="helix" evidence="4">
    <location>
        <begin position="126"/>
        <end position="146"/>
    </location>
</feature>
<feature type="strand" evidence="4">
    <location>
        <begin position="155"/>
        <end position="160"/>
    </location>
</feature>
<feature type="helix" evidence="4">
    <location>
        <begin position="164"/>
        <end position="175"/>
    </location>
</feature>
<feature type="strand" evidence="4">
    <location>
        <begin position="179"/>
        <end position="186"/>
    </location>
</feature>
<feature type="helix" evidence="4">
    <location>
        <begin position="187"/>
        <end position="195"/>
    </location>
</feature>
<feature type="strand" evidence="4">
    <location>
        <begin position="199"/>
        <end position="202"/>
    </location>
</feature>
<feature type="helix" evidence="4">
    <location>
        <begin position="203"/>
        <end position="205"/>
    </location>
</feature>
<feature type="helix" evidence="4">
    <location>
        <begin position="206"/>
        <end position="209"/>
    </location>
</feature>
<feature type="strand" evidence="4">
    <location>
        <begin position="214"/>
        <end position="218"/>
    </location>
</feature>
<feature type="helix" evidence="4">
    <location>
        <begin position="227"/>
        <end position="230"/>
    </location>
</feature>
<feature type="strand" evidence="4">
    <location>
        <begin position="238"/>
        <end position="241"/>
    </location>
</feature>
<feature type="helix" evidence="4">
    <location>
        <begin position="251"/>
        <end position="257"/>
    </location>
</feature>
<feature type="strand" evidence="4">
    <location>
        <begin position="260"/>
        <end position="263"/>
    </location>
</feature>
<feature type="helix" evidence="4">
    <location>
        <begin position="267"/>
        <end position="271"/>
    </location>
</feature>
<feature type="helix" evidence="4">
    <location>
        <begin position="273"/>
        <end position="294"/>
    </location>
</feature>
<sequence>MLTGLKIAVIGGDARQLEIIRKLTEQQADIYLVGFDQLDHGFTGAVKCNIDEIPFQQIDSIILPVSATTGEGVVSTVFSNEEVVLKQDHLDRTPAHCVIFSGISNAYLENIAAQAKRKLVKLFERDDIAIYNSIPTVEGTIMLAIQHTDYTIHGSQVAVLGLGRTGMTIARTFAALGANVKVGARSSAHLARITEMGLVPFHTDELKEHVKDIDICINTIPSMILNQTVLSSMTPKTLILDLASRPGGTDFKYAEKQGIKALLAPGLPGIVAPKTAGQILANVLSKLLAEIQAEEGK</sequence>
<protein>
    <recommendedName>
        <fullName>Dipicolinate synthase subunit A</fullName>
        <shortName>DPA synthase subunit A</shortName>
        <ecNumber>1.3.1.-</ecNumber>
    </recommendedName>
    <alternativeName>
        <fullName>Spore dipicolinate synthase subunit A</fullName>
    </alternativeName>
    <alternativeName>
        <fullName>Stage V sporulation protein FA</fullName>
    </alternativeName>
</protein>
<evidence type="ECO:0000269" key="1">
    <source>
    </source>
</evidence>
<evidence type="ECO:0000269" key="2">
    <source>
    </source>
</evidence>
<evidence type="ECO:0000269" key="3">
    <source ref="4"/>
</evidence>
<evidence type="ECO:0007829" key="4">
    <source>
        <dbReference type="PDB" id="2RIR"/>
    </source>
</evidence>